<name>RL5_HALOH</name>
<accession>B8D0D6</accession>
<gene>
    <name evidence="1" type="primary">rplE</name>
    <name type="ordered locus">Hore_01290</name>
</gene>
<evidence type="ECO:0000255" key="1">
    <source>
        <dbReference type="HAMAP-Rule" id="MF_01333"/>
    </source>
</evidence>
<evidence type="ECO:0000305" key="2"/>
<keyword id="KW-1185">Reference proteome</keyword>
<keyword id="KW-0687">Ribonucleoprotein</keyword>
<keyword id="KW-0689">Ribosomal protein</keyword>
<keyword id="KW-0694">RNA-binding</keyword>
<keyword id="KW-0699">rRNA-binding</keyword>
<keyword id="KW-0820">tRNA-binding</keyword>
<feature type="chain" id="PRO_1000214633" description="Large ribosomal subunit protein uL5">
    <location>
        <begin position="1"/>
        <end position="179"/>
    </location>
</feature>
<comment type="function">
    <text evidence="1">This is one of the proteins that bind and probably mediate the attachment of the 5S RNA into the large ribosomal subunit, where it forms part of the central protuberance. In the 70S ribosome it contacts protein S13 of the 30S subunit (bridge B1b), connecting the 2 subunits; this bridge is implicated in subunit movement. Contacts the P site tRNA; the 5S rRNA and some of its associated proteins might help stabilize positioning of ribosome-bound tRNAs.</text>
</comment>
<comment type="subunit">
    <text evidence="1">Part of the 50S ribosomal subunit; part of the 5S rRNA/L5/L18/L25 subcomplex. Contacts the 5S rRNA and the P site tRNA. Forms a bridge to the 30S subunit in the 70S ribosome.</text>
</comment>
<comment type="similarity">
    <text evidence="1">Belongs to the universal ribosomal protein uL5 family.</text>
</comment>
<protein>
    <recommendedName>
        <fullName evidence="1">Large ribosomal subunit protein uL5</fullName>
    </recommendedName>
    <alternativeName>
        <fullName evidence="2">50S ribosomal protein L5</fullName>
    </alternativeName>
</protein>
<dbReference type="EMBL" id="CP001098">
    <property type="protein sequence ID" value="ACL68890.1"/>
    <property type="molecule type" value="Genomic_DNA"/>
</dbReference>
<dbReference type="RefSeq" id="WP_012635088.1">
    <property type="nucleotide sequence ID" value="NC_011899.1"/>
</dbReference>
<dbReference type="SMR" id="B8D0D6"/>
<dbReference type="STRING" id="373903.Hore_01290"/>
<dbReference type="KEGG" id="hor:Hore_01290"/>
<dbReference type="eggNOG" id="COG0094">
    <property type="taxonomic scope" value="Bacteria"/>
</dbReference>
<dbReference type="HOGENOM" id="CLU_061015_2_1_9"/>
<dbReference type="OrthoDB" id="9806626at2"/>
<dbReference type="Proteomes" id="UP000000719">
    <property type="component" value="Chromosome"/>
</dbReference>
<dbReference type="GO" id="GO:1990904">
    <property type="term" value="C:ribonucleoprotein complex"/>
    <property type="evidence" value="ECO:0007669"/>
    <property type="project" value="UniProtKB-KW"/>
</dbReference>
<dbReference type="GO" id="GO:0005840">
    <property type="term" value="C:ribosome"/>
    <property type="evidence" value="ECO:0007669"/>
    <property type="project" value="UniProtKB-KW"/>
</dbReference>
<dbReference type="GO" id="GO:0019843">
    <property type="term" value="F:rRNA binding"/>
    <property type="evidence" value="ECO:0007669"/>
    <property type="project" value="UniProtKB-UniRule"/>
</dbReference>
<dbReference type="GO" id="GO:0003735">
    <property type="term" value="F:structural constituent of ribosome"/>
    <property type="evidence" value="ECO:0007669"/>
    <property type="project" value="InterPro"/>
</dbReference>
<dbReference type="GO" id="GO:0000049">
    <property type="term" value="F:tRNA binding"/>
    <property type="evidence" value="ECO:0007669"/>
    <property type="project" value="UniProtKB-UniRule"/>
</dbReference>
<dbReference type="GO" id="GO:0006412">
    <property type="term" value="P:translation"/>
    <property type="evidence" value="ECO:0007669"/>
    <property type="project" value="UniProtKB-UniRule"/>
</dbReference>
<dbReference type="FunFam" id="3.30.1440.10:FF:000001">
    <property type="entry name" value="50S ribosomal protein L5"/>
    <property type="match status" value="1"/>
</dbReference>
<dbReference type="Gene3D" id="3.30.1440.10">
    <property type="match status" value="1"/>
</dbReference>
<dbReference type="HAMAP" id="MF_01333_B">
    <property type="entry name" value="Ribosomal_uL5_B"/>
    <property type="match status" value="1"/>
</dbReference>
<dbReference type="InterPro" id="IPR002132">
    <property type="entry name" value="Ribosomal_uL5"/>
</dbReference>
<dbReference type="InterPro" id="IPR020930">
    <property type="entry name" value="Ribosomal_uL5_bac-type"/>
</dbReference>
<dbReference type="InterPro" id="IPR031309">
    <property type="entry name" value="Ribosomal_uL5_C"/>
</dbReference>
<dbReference type="InterPro" id="IPR020929">
    <property type="entry name" value="Ribosomal_uL5_CS"/>
</dbReference>
<dbReference type="InterPro" id="IPR022803">
    <property type="entry name" value="Ribosomal_uL5_dom_sf"/>
</dbReference>
<dbReference type="InterPro" id="IPR031310">
    <property type="entry name" value="Ribosomal_uL5_N"/>
</dbReference>
<dbReference type="NCBIfam" id="NF000585">
    <property type="entry name" value="PRK00010.1"/>
    <property type="match status" value="1"/>
</dbReference>
<dbReference type="PANTHER" id="PTHR11994">
    <property type="entry name" value="60S RIBOSOMAL PROTEIN L11-RELATED"/>
    <property type="match status" value="1"/>
</dbReference>
<dbReference type="Pfam" id="PF00281">
    <property type="entry name" value="Ribosomal_L5"/>
    <property type="match status" value="1"/>
</dbReference>
<dbReference type="Pfam" id="PF00673">
    <property type="entry name" value="Ribosomal_L5_C"/>
    <property type="match status" value="1"/>
</dbReference>
<dbReference type="PIRSF" id="PIRSF002161">
    <property type="entry name" value="Ribosomal_L5"/>
    <property type="match status" value="1"/>
</dbReference>
<dbReference type="SUPFAM" id="SSF55282">
    <property type="entry name" value="RL5-like"/>
    <property type="match status" value="1"/>
</dbReference>
<dbReference type="PROSITE" id="PS00358">
    <property type="entry name" value="RIBOSOMAL_L5"/>
    <property type="match status" value="1"/>
</dbReference>
<sequence length="179" mass="20315">MSVLAEQYKEEIVPKLMDKFDYENIMAVPRVEKVVVNVGMGELKEDPKLIDVVVNDIASITGQKPVITRAKKSVANFKIREGMPIGAKVTLRGETMYEFLYKLVNVTLPRIRDFRGVSPKSFDGRGNYNIGIREHIVFPEIEIDKVDKVYGLEITIVTSAETDEEAYELLKLMGMPFNQ</sequence>
<proteinExistence type="inferred from homology"/>
<reference key="1">
    <citation type="journal article" date="2009" name="PLoS ONE">
        <title>Genome analysis of the anaerobic thermohalophilic bacterium Halothermothrix orenii.</title>
        <authorList>
            <person name="Mavromatis K."/>
            <person name="Ivanova N."/>
            <person name="Anderson I."/>
            <person name="Lykidis A."/>
            <person name="Hooper S.D."/>
            <person name="Sun H."/>
            <person name="Kunin V."/>
            <person name="Lapidus A."/>
            <person name="Hugenholtz P."/>
            <person name="Patel B."/>
            <person name="Kyrpides N.C."/>
        </authorList>
    </citation>
    <scope>NUCLEOTIDE SEQUENCE [LARGE SCALE GENOMIC DNA]</scope>
    <source>
        <strain>H 168 / OCM 544 / DSM 9562</strain>
    </source>
</reference>
<organism>
    <name type="scientific">Halothermothrix orenii (strain H 168 / OCM 544 / DSM 9562)</name>
    <dbReference type="NCBI Taxonomy" id="373903"/>
    <lineage>
        <taxon>Bacteria</taxon>
        <taxon>Bacillati</taxon>
        <taxon>Bacillota</taxon>
        <taxon>Clostridia</taxon>
        <taxon>Halanaerobiales</taxon>
        <taxon>Halothermotrichaceae</taxon>
        <taxon>Halothermothrix</taxon>
    </lineage>
</organism>